<dbReference type="EMBL" id="AL050351">
    <property type="protein sequence ID" value="CAB43633.1"/>
    <property type="status" value="ALT_SEQ"/>
    <property type="molecule type" value="Genomic_DNA"/>
</dbReference>
<dbReference type="EMBL" id="AL161594">
    <property type="protein sequence ID" value="CAB80581.1"/>
    <property type="status" value="ALT_SEQ"/>
    <property type="molecule type" value="Genomic_DNA"/>
</dbReference>
<dbReference type="EMBL" id="CP002687">
    <property type="protein sequence ID" value="AEE87033.1"/>
    <property type="molecule type" value="Genomic_DNA"/>
</dbReference>
<dbReference type="PIR" id="T08566">
    <property type="entry name" value="T08566"/>
</dbReference>
<dbReference type="RefSeq" id="NP_195629.2">
    <molecule id="F4JVA9-1"/>
    <property type="nucleotide sequence ID" value="NM_120078.2"/>
</dbReference>
<dbReference type="SMR" id="F4JVA9"/>
<dbReference type="FunCoup" id="F4JVA9">
    <property type="interactions" value="50"/>
</dbReference>
<dbReference type="STRING" id="3702.F4JVA9"/>
<dbReference type="PaxDb" id="3702-AT4G39180.1"/>
<dbReference type="ProteomicsDB" id="234517">
    <molecule id="F4JVA9-1"/>
</dbReference>
<dbReference type="EnsemblPlants" id="AT4G39180.1">
    <molecule id="F4JVA9-1"/>
    <property type="protein sequence ID" value="AT4G39180.1"/>
    <property type="gene ID" value="AT4G39180"/>
</dbReference>
<dbReference type="GeneID" id="830073"/>
<dbReference type="Gramene" id="AT4G39180.1">
    <molecule id="F4JVA9-1"/>
    <property type="protein sequence ID" value="AT4G39180.1"/>
    <property type="gene ID" value="AT4G39180"/>
</dbReference>
<dbReference type="KEGG" id="ath:AT4G39180"/>
<dbReference type="Araport" id="AT4G39180"/>
<dbReference type="TAIR" id="AT4G39180">
    <property type="gene designation" value="SEC14"/>
</dbReference>
<dbReference type="eggNOG" id="KOG1471">
    <property type="taxonomic scope" value="Eukaryota"/>
</dbReference>
<dbReference type="InParanoid" id="F4JVA9"/>
<dbReference type="OMA" id="CHLDAKT"/>
<dbReference type="PRO" id="PR:F4JVA9"/>
<dbReference type="Proteomes" id="UP000006548">
    <property type="component" value="Chromosome 4"/>
</dbReference>
<dbReference type="ExpressionAtlas" id="F4JVA9">
    <property type="expression patterns" value="baseline and differential"/>
</dbReference>
<dbReference type="GO" id="GO:0000139">
    <property type="term" value="C:Golgi membrane"/>
    <property type="evidence" value="ECO:0007669"/>
    <property type="project" value="UniProtKB-SubCell"/>
</dbReference>
<dbReference type="GO" id="GO:0005886">
    <property type="term" value="C:plasma membrane"/>
    <property type="evidence" value="ECO:0007669"/>
    <property type="project" value="UniProtKB-SubCell"/>
</dbReference>
<dbReference type="GO" id="GO:0006656">
    <property type="term" value="P:phosphatidylcholine biosynthetic process"/>
    <property type="evidence" value="ECO:0000304"/>
    <property type="project" value="TAIR"/>
</dbReference>
<dbReference type="GO" id="GO:0015031">
    <property type="term" value="P:protein transport"/>
    <property type="evidence" value="ECO:0007669"/>
    <property type="project" value="UniProtKB-KW"/>
</dbReference>
<dbReference type="CDD" id="cd00170">
    <property type="entry name" value="SEC14"/>
    <property type="match status" value="1"/>
</dbReference>
<dbReference type="FunFam" id="1.10.8.20:FF:000006">
    <property type="entry name" value="Phosphatidylinositol/phosphatidylcholine transfer protein SFH3"/>
    <property type="match status" value="1"/>
</dbReference>
<dbReference type="FunFam" id="3.40.525.10:FF:000011">
    <property type="entry name" value="SEC14 cytosolic factor"/>
    <property type="match status" value="1"/>
</dbReference>
<dbReference type="Gene3D" id="3.40.525.10">
    <property type="entry name" value="CRAL-TRIO lipid binding domain"/>
    <property type="match status" value="1"/>
</dbReference>
<dbReference type="Gene3D" id="1.10.8.20">
    <property type="entry name" value="N-terminal domain of phosphatidylinositol transfer protein sec14p"/>
    <property type="match status" value="1"/>
</dbReference>
<dbReference type="InterPro" id="IPR001251">
    <property type="entry name" value="CRAL-TRIO_dom"/>
</dbReference>
<dbReference type="InterPro" id="IPR036865">
    <property type="entry name" value="CRAL-TRIO_dom_sf"/>
</dbReference>
<dbReference type="InterPro" id="IPR011074">
    <property type="entry name" value="CRAL/TRIO_N_dom"/>
</dbReference>
<dbReference type="InterPro" id="IPR036273">
    <property type="entry name" value="CRAL/TRIO_N_dom_sf"/>
</dbReference>
<dbReference type="InterPro" id="IPR051026">
    <property type="entry name" value="PI/PC_transfer"/>
</dbReference>
<dbReference type="PANTHER" id="PTHR45657">
    <property type="entry name" value="CRAL-TRIO DOMAIN-CONTAINING PROTEIN YKL091C-RELATED"/>
    <property type="match status" value="1"/>
</dbReference>
<dbReference type="PANTHER" id="PTHR45657:SF19">
    <property type="entry name" value="PHOSPHATIDYLINOSITOL_PHOSPHATIDYLCHOLINE TRANSFER PROTEIN SFH2"/>
    <property type="match status" value="1"/>
</dbReference>
<dbReference type="Pfam" id="PF00650">
    <property type="entry name" value="CRAL_TRIO"/>
    <property type="match status" value="1"/>
</dbReference>
<dbReference type="Pfam" id="PF03765">
    <property type="entry name" value="CRAL_TRIO_N"/>
    <property type="match status" value="1"/>
</dbReference>
<dbReference type="PRINTS" id="PR00180">
    <property type="entry name" value="CRETINALDHBP"/>
</dbReference>
<dbReference type="SMART" id="SM01100">
    <property type="entry name" value="CRAL_TRIO_N"/>
    <property type="match status" value="1"/>
</dbReference>
<dbReference type="SMART" id="SM00516">
    <property type="entry name" value="SEC14"/>
    <property type="match status" value="1"/>
</dbReference>
<dbReference type="SUPFAM" id="SSF52087">
    <property type="entry name" value="CRAL/TRIO domain"/>
    <property type="match status" value="1"/>
</dbReference>
<dbReference type="SUPFAM" id="SSF46938">
    <property type="entry name" value="CRAL/TRIO N-terminal domain"/>
    <property type="match status" value="1"/>
</dbReference>
<dbReference type="PROSITE" id="PS50191">
    <property type="entry name" value="CRAL_TRIO"/>
    <property type="match status" value="1"/>
</dbReference>
<organism>
    <name type="scientific">Arabidopsis thaliana</name>
    <name type="common">Mouse-ear cress</name>
    <dbReference type="NCBI Taxonomy" id="3702"/>
    <lineage>
        <taxon>Eukaryota</taxon>
        <taxon>Viridiplantae</taxon>
        <taxon>Streptophyta</taxon>
        <taxon>Embryophyta</taxon>
        <taxon>Tracheophyta</taxon>
        <taxon>Spermatophyta</taxon>
        <taxon>Magnoliopsida</taxon>
        <taxon>eudicotyledons</taxon>
        <taxon>Gunneridae</taxon>
        <taxon>Pentapetalae</taxon>
        <taxon>rosids</taxon>
        <taxon>malvids</taxon>
        <taxon>Brassicales</taxon>
        <taxon>Brassicaceae</taxon>
        <taxon>Camelineae</taxon>
        <taxon>Arabidopsis</taxon>
    </lineage>
</organism>
<accession>F4JVA9</accession>
<accession>Q9T027</accession>
<gene>
    <name type="primary">SFH2</name>
    <name type="ordered locus">At4g39180</name>
    <name type="ORF">T22F8.80</name>
</gene>
<comment type="function">
    <text evidence="1 4">Required for transport of secretory proteins from the Golgi complex (By similarity). Catalyzes the transfer of phosphatidylinositol and phosphatidylcholine between membranes in vitro.</text>
</comment>
<comment type="subcellular location">
    <subcellularLocation>
        <location evidence="1">Golgi apparatus membrane</location>
        <topology evidence="1">Peripheral membrane protein</topology>
    </subcellularLocation>
    <subcellularLocation>
        <location evidence="1">Cell membrane</location>
        <topology evidence="1">Peripheral membrane protein</topology>
    </subcellularLocation>
</comment>
<comment type="alternative products">
    <event type="alternative splicing"/>
    <isoform>
        <id>F4JVA9-1</id>
        <name>1</name>
        <sequence type="displayed"/>
    </isoform>
    <text>A number of isoforms are produced. According to EST sequences.</text>
</comment>
<comment type="similarity">
    <text evidence="5">Belongs to the SFH family.</text>
</comment>
<comment type="sequence caution" evidence="5">
    <conflict type="erroneous gene model prediction">
        <sequence resource="EMBL-CDS" id="CAB43633"/>
    </conflict>
</comment>
<comment type="sequence caution" evidence="5">
    <conflict type="erroneous gene model prediction">
        <sequence resource="EMBL-CDS" id="CAB80581"/>
    </conflict>
</comment>
<evidence type="ECO:0000250" key="1"/>
<evidence type="ECO:0000255" key="2"/>
<evidence type="ECO:0000255" key="3">
    <source>
        <dbReference type="PROSITE-ProRule" id="PRU00056"/>
    </source>
</evidence>
<evidence type="ECO:0000269" key="4">
    <source>
    </source>
</evidence>
<evidence type="ECO:0000305" key="5"/>
<protein>
    <recommendedName>
        <fullName>Phosphatidylinositol/phosphatidylcholine transfer protein SFH2</fullName>
    </recommendedName>
    <alternativeName>
        <fullName>Protein SEC FOURTEEN HOMOLOGS 2</fullName>
        <shortName>AtSFH2</shortName>
    </alternativeName>
</protein>
<keyword id="KW-0025">Alternative splicing</keyword>
<keyword id="KW-1003">Cell membrane</keyword>
<keyword id="KW-0175">Coiled coil</keyword>
<keyword id="KW-0333">Golgi apparatus</keyword>
<keyword id="KW-0472">Membrane</keyword>
<keyword id="KW-0653">Protein transport</keyword>
<keyword id="KW-1185">Reference proteome</keyword>
<keyword id="KW-0813">Transport</keyword>
<proteinExistence type="inferred from homology"/>
<feature type="chain" id="PRO_0000423462" description="Phosphatidylinositol/phosphatidylcholine transfer protein SFH2">
    <location>
        <begin position="1"/>
        <end position="554"/>
    </location>
</feature>
<feature type="domain" description="CRAL-TRIO" evidence="3">
    <location>
        <begin position="138"/>
        <end position="312"/>
    </location>
</feature>
<feature type="coiled-coil region" evidence="2">
    <location>
        <begin position="472"/>
        <end position="534"/>
    </location>
</feature>
<name>SFH2_ARATH</name>
<sequence length="554" mass="63860">MADTMVAHMDRHNKIDVEISEDDKRLTKLCSLKKKAINATNKFKHSMTKKGRRHSRVACVSIVDEIDTEELQAVDAFRQALILDELLPSKHDDHHMMLRFLRARKFDLEKAKQMWSDMLNWRKEYGADTIMEDFDFKEIEEVVKYYPQGYHGVDKEGRPIYIERLGQVDATKLMKVTTIDRYVKYHVKEFEKTFNVKFPACSIAAKRHIDQSTTILDVQGVGLSNFNKAAKDLLQSIQKIDNDNYPETLNRMFIINAGCGFRLLWNTVKSFLDPKTTAKIHVLGNKYQTKLLEIIDANELPEFLGGKCTCADKGGCMRSDKGPWNDPEIFKLVQNGEGRCLRRSLSGIEEKTIFEYNNETKKKCEPEETHKQSAAEMEKKFIDTNVDAAAAADWPTKLNKAEKNPTDLKDVYSAVNPLERKGYLYGSVMALLMGIVGVMRLTKNMPRRLTEANVYSREGSAVYQDGVTVMSKQEYIAMVKKITDLEEKCKSMEAQAAFYMEREKTLDAALRRIDQLELQLSETNKALDETMTRQHEIMAFIEKKKKKKRKFLLF</sequence>
<reference key="1">
    <citation type="journal article" date="1999" name="Nature">
        <title>Sequence and analysis of chromosome 4 of the plant Arabidopsis thaliana.</title>
        <authorList>
            <person name="Mayer K.F.X."/>
            <person name="Schueller C."/>
            <person name="Wambutt R."/>
            <person name="Murphy G."/>
            <person name="Volckaert G."/>
            <person name="Pohl T."/>
            <person name="Duesterhoeft A."/>
            <person name="Stiekema W."/>
            <person name="Entian K.-D."/>
            <person name="Terryn N."/>
            <person name="Harris B."/>
            <person name="Ansorge W."/>
            <person name="Brandt P."/>
            <person name="Grivell L.A."/>
            <person name="Rieger M."/>
            <person name="Weichselgartner M."/>
            <person name="de Simone V."/>
            <person name="Obermaier B."/>
            <person name="Mache R."/>
            <person name="Mueller M."/>
            <person name="Kreis M."/>
            <person name="Delseny M."/>
            <person name="Puigdomenech P."/>
            <person name="Watson M."/>
            <person name="Schmidtheini T."/>
            <person name="Reichert B."/>
            <person name="Portetelle D."/>
            <person name="Perez-Alonso M."/>
            <person name="Boutry M."/>
            <person name="Bancroft I."/>
            <person name="Vos P."/>
            <person name="Hoheisel J."/>
            <person name="Zimmermann W."/>
            <person name="Wedler H."/>
            <person name="Ridley P."/>
            <person name="Langham S.-A."/>
            <person name="McCullagh B."/>
            <person name="Bilham L."/>
            <person name="Robben J."/>
            <person name="van der Schueren J."/>
            <person name="Grymonprez B."/>
            <person name="Chuang Y.-J."/>
            <person name="Vandenbussche F."/>
            <person name="Braeken M."/>
            <person name="Weltjens I."/>
            <person name="Voet M."/>
            <person name="Bastiaens I."/>
            <person name="Aert R."/>
            <person name="Defoor E."/>
            <person name="Weitzenegger T."/>
            <person name="Bothe G."/>
            <person name="Ramsperger U."/>
            <person name="Hilbert H."/>
            <person name="Braun M."/>
            <person name="Holzer E."/>
            <person name="Brandt A."/>
            <person name="Peters S."/>
            <person name="van Staveren M."/>
            <person name="Dirkse W."/>
            <person name="Mooijman P."/>
            <person name="Klein Lankhorst R."/>
            <person name="Rose M."/>
            <person name="Hauf J."/>
            <person name="Koetter P."/>
            <person name="Berneiser S."/>
            <person name="Hempel S."/>
            <person name="Feldpausch M."/>
            <person name="Lamberth S."/>
            <person name="Van den Daele H."/>
            <person name="De Keyser A."/>
            <person name="Buysshaert C."/>
            <person name="Gielen J."/>
            <person name="Villarroel R."/>
            <person name="De Clercq R."/>
            <person name="van Montagu M."/>
            <person name="Rogers J."/>
            <person name="Cronin A."/>
            <person name="Quail M.A."/>
            <person name="Bray-Allen S."/>
            <person name="Clark L."/>
            <person name="Doggett J."/>
            <person name="Hall S."/>
            <person name="Kay M."/>
            <person name="Lennard N."/>
            <person name="McLay K."/>
            <person name="Mayes R."/>
            <person name="Pettett A."/>
            <person name="Rajandream M.A."/>
            <person name="Lyne M."/>
            <person name="Benes V."/>
            <person name="Rechmann S."/>
            <person name="Borkova D."/>
            <person name="Bloecker H."/>
            <person name="Scharfe M."/>
            <person name="Grimm M."/>
            <person name="Loehnert T.-H."/>
            <person name="Dose S."/>
            <person name="de Haan M."/>
            <person name="Maarse A.C."/>
            <person name="Schaefer M."/>
            <person name="Mueller-Auer S."/>
            <person name="Gabel C."/>
            <person name="Fuchs M."/>
            <person name="Fartmann B."/>
            <person name="Granderath K."/>
            <person name="Dauner D."/>
            <person name="Herzl A."/>
            <person name="Neumann S."/>
            <person name="Argiriou A."/>
            <person name="Vitale D."/>
            <person name="Liguori R."/>
            <person name="Piravandi E."/>
            <person name="Massenet O."/>
            <person name="Quigley F."/>
            <person name="Clabauld G."/>
            <person name="Muendlein A."/>
            <person name="Felber R."/>
            <person name="Schnabl S."/>
            <person name="Hiller R."/>
            <person name="Schmidt W."/>
            <person name="Lecharny A."/>
            <person name="Aubourg S."/>
            <person name="Chefdor F."/>
            <person name="Cooke R."/>
            <person name="Berger C."/>
            <person name="Monfort A."/>
            <person name="Casacuberta E."/>
            <person name="Gibbons T."/>
            <person name="Weber N."/>
            <person name="Vandenbol M."/>
            <person name="Bargues M."/>
            <person name="Terol J."/>
            <person name="Torres A."/>
            <person name="Perez-Perez A."/>
            <person name="Purnelle B."/>
            <person name="Bent E."/>
            <person name="Johnson S."/>
            <person name="Tacon D."/>
            <person name="Jesse T."/>
            <person name="Heijnen L."/>
            <person name="Schwarz S."/>
            <person name="Scholler P."/>
            <person name="Heber S."/>
            <person name="Francs P."/>
            <person name="Bielke C."/>
            <person name="Frishman D."/>
            <person name="Haase D."/>
            <person name="Lemcke K."/>
            <person name="Mewes H.-W."/>
            <person name="Stocker S."/>
            <person name="Zaccaria P."/>
            <person name="Bevan M."/>
            <person name="Wilson R.K."/>
            <person name="de la Bastide M."/>
            <person name="Habermann K."/>
            <person name="Parnell L."/>
            <person name="Dedhia N."/>
            <person name="Gnoj L."/>
            <person name="Schutz K."/>
            <person name="Huang E."/>
            <person name="Spiegel L."/>
            <person name="Sekhon M."/>
            <person name="Murray J."/>
            <person name="Sheet P."/>
            <person name="Cordes M."/>
            <person name="Abu-Threideh J."/>
            <person name="Stoneking T."/>
            <person name="Kalicki J."/>
            <person name="Graves T."/>
            <person name="Harmon G."/>
            <person name="Edwards J."/>
            <person name="Latreille P."/>
            <person name="Courtney L."/>
            <person name="Cloud J."/>
            <person name="Abbott A."/>
            <person name="Scott K."/>
            <person name="Johnson D."/>
            <person name="Minx P."/>
            <person name="Bentley D."/>
            <person name="Fulton B."/>
            <person name="Miller N."/>
            <person name="Greco T."/>
            <person name="Kemp K."/>
            <person name="Kramer J."/>
            <person name="Fulton L."/>
            <person name="Mardis E."/>
            <person name="Dante M."/>
            <person name="Pepin K."/>
            <person name="Hillier L.W."/>
            <person name="Nelson J."/>
            <person name="Spieth J."/>
            <person name="Ryan E."/>
            <person name="Andrews S."/>
            <person name="Geisel C."/>
            <person name="Layman D."/>
            <person name="Du H."/>
            <person name="Ali J."/>
            <person name="Berghoff A."/>
            <person name="Jones K."/>
            <person name="Drone K."/>
            <person name="Cotton M."/>
            <person name="Joshu C."/>
            <person name="Antonoiu B."/>
            <person name="Zidanic M."/>
            <person name="Strong C."/>
            <person name="Sun H."/>
            <person name="Lamar B."/>
            <person name="Yordan C."/>
            <person name="Ma P."/>
            <person name="Zhong J."/>
            <person name="Preston R."/>
            <person name="Vil D."/>
            <person name="Shekher M."/>
            <person name="Matero A."/>
            <person name="Shah R."/>
            <person name="Swaby I.K."/>
            <person name="O'Shaughnessy A."/>
            <person name="Rodriguez M."/>
            <person name="Hoffman J."/>
            <person name="Till S."/>
            <person name="Granat S."/>
            <person name="Shohdy N."/>
            <person name="Hasegawa A."/>
            <person name="Hameed A."/>
            <person name="Lodhi M."/>
            <person name="Johnson A."/>
            <person name="Chen E."/>
            <person name="Marra M.A."/>
            <person name="Martienssen R."/>
            <person name="McCombie W.R."/>
        </authorList>
    </citation>
    <scope>NUCLEOTIDE SEQUENCE [LARGE SCALE GENOMIC DNA]</scope>
    <source>
        <strain>cv. Columbia</strain>
    </source>
</reference>
<reference key="2">
    <citation type="journal article" date="2017" name="Plant J.">
        <title>Araport11: a complete reannotation of the Arabidopsis thaliana reference genome.</title>
        <authorList>
            <person name="Cheng C.Y."/>
            <person name="Krishnakumar V."/>
            <person name="Chan A.P."/>
            <person name="Thibaud-Nissen F."/>
            <person name="Schobel S."/>
            <person name="Town C.D."/>
        </authorList>
    </citation>
    <scope>GENOME REANNOTATION</scope>
    <source>
        <strain>cv. Columbia</strain>
    </source>
</reference>
<reference key="3">
    <citation type="journal article" date="2005" name="J. Cell Biol.">
        <title>A Sec14p-nodulin domain phosphatidylinositol transfer protein polarizes membrane growth of Arabidopsis thaliana root hairs.</title>
        <authorList>
            <person name="Vincent P."/>
            <person name="Chua M."/>
            <person name="Nogue F."/>
            <person name="Fairbrother A."/>
            <person name="Mekeel H."/>
            <person name="Xu Y."/>
            <person name="Allen N."/>
            <person name="Bibikova T.N."/>
            <person name="Gilroy S."/>
            <person name="Bankaitis V.A."/>
        </authorList>
    </citation>
    <scope>GENE FAMILY</scope>
    <scope>FUNCTION</scope>
</reference>
<reference key="4">
    <citation type="journal article" date="2006" name="Nat. Chem. Biol.">
        <title>Phosphatidylinositol transfer proteins and cellular nanoreactors for lipid signaling.</title>
        <authorList>
            <person name="Ile K.E."/>
            <person name="Schaaf G."/>
            <person name="Bankaitis V.A."/>
        </authorList>
    </citation>
    <scope>REVIEW</scope>
</reference>